<gene>
    <name type="ordered locus">bll5266</name>
</gene>
<dbReference type="EC" id="4.1.1.112" evidence="1"/>
<dbReference type="EMBL" id="BA000040">
    <property type="protein sequence ID" value="BAC50531.1"/>
    <property type="molecule type" value="Genomic_DNA"/>
</dbReference>
<dbReference type="RefSeq" id="NP_771906.1">
    <property type="nucleotide sequence ID" value="NC_004463.1"/>
</dbReference>
<dbReference type="RefSeq" id="WP_011088022.1">
    <property type="nucleotide sequence ID" value="NC_004463.1"/>
</dbReference>
<dbReference type="SMR" id="Q89JL7"/>
<dbReference type="FunCoup" id="Q89JL7">
    <property type="interactions" value="312"/>
</dbReference>
<dbReference type="STRING" id="224911.AAV28_23710"/>
<dbReference type="EnsemblBacteria" id="BAC50531">
    <property type="protein sequence ID" value="BAC50531"/>
    <property type="gene ID" value="BAC50531"/>
</dbReference>
<dbReference type="GeneID" id="46492260"/>
<dbReference type="KEGG" id="bja:bll5266"/>
<dbReference type="PATRIC" id="fig|224911.44.peg.5155"/>
<dbReference type="eggNOG" id="COG2513">
    <property type="taxonomic scope" value="Bacteria"/>
</dbReference>
<dbReference type="HOGENOM" id="CLU_027389_3_2_5"/>
<dbReference type="InParanoid" id="Q89JL7"/>
<dbReference type="OrthoDB" id="9771433at2"/>
<dbReference type="PhylomeDB" id="Q89JL7"/>
<dbReference type="Proteomes" id="UP000002526">
    <property type="component" value="Chromosome"/>
</dbReference>
<dbReference type="GO" id="GO:0000287">
    <property type="term" value="F:magnesium ion binding"/>
    <property type="evidence" value="ECO:0007669"/>
    <property type="project" value="UniProtKB-UniRule"/>
</dbReference>
<dbReference type="GO" id="GO:0046421">
    <property type="term" value="F:methylisocitrate lyase activity"/>
    <property type="evidence" value="ECO:0000318"/>
    <property type="project" value="GO_Central"/>
</dbReference>
<dbReference type="GO" id="GO:0008948">
    <property type="term" value="F:oxaloacetate decarboxylase activity"/>
    <property type="evidence" value="ECO:0007669"/>
    <property type="project" value="UniProtKB-UniRule"/>
</dbReference>
<dbReference type="GO" id="GO:0006107">
    <property type="term" value="P:oxaloacetate metabolic process"/>
    <property type="evidence" value="ECO:0007669"/>
    <property type="project" value="UniProtKB-UniRule"/>
</dbReference>
<dbReference type="GO" id="GO:0019629">
    <property type="term" value="P:propionate catabolic process, 2-methylcitrate cycle"/>
    <property type="evidence" value="ECO:0000318"/>
    <property type="project" value="GO_Central"/>
</dbReference>
<dbReference type="GO" id="GO:0042866">
    <property type="term" value="P:pyruvate biosynthetic process"/>
    <property type="evidence" value="ECO:0007669"/>
    <property type="project" value="UniProtKB-UniRule"/>
</dbReference>
<dbReference type="CDD" id="cd00377">
    <property type="entry name" value="ICL_PEPM"/>
    <property type="match status" value="1"/>
</dbReference>
<dbReference type="Gene3D" id="3.20.20.60">
    <property type="entry name" value="Phosphoenolpyruvate-binding domains"/>
    <property type="match status" value="1"/>
</dbReference>
<dbReference type="HAMAP" id="MF_01299">
    <property type="entry name" value="OadC"/>
    <property type="match status" value="1"/>
</dbReference>
<dbReference type="InterPro" id="IPR039556">
    <property type="entry name" value="ICL/PEPM"/>
</dbReference>
<dbReference type="InterPro" id="IPR023687">
    <property type="entry name" value="Oxaloacetate_deCOase_bac"/>
</dbReference>
<dbReference type="InterPro" id="IPR015813">
    <property type="entry name" value="Pyrv/PenolPyrv_kinase-like_dom"/>
</dbReference>
<dbReference type="InterPro" id="IPR040442">
    <property type="entry name" value="Pyrv_kinase-like_dom_sf"/>
</dbReference>
<dbReference type="PANTHER" id="PTHR42905:SF3">
    <property type="entry name" value="OXALOACETATE DECARBOXYLASE"/>
    <property type="match status" value="1"/>
</dbReference>
<dbReference type="PANTHER" id="PTHR42905">
    <property type="entry name" value="PHOSPHOENOLPYRUVATE CARBOXYLASE"/>
    <property type="match status" value="1"/>
</dbReference>
<dbReference type="Pfam" id="PF13714">
    <property type="entry name" value="PEP_mutase"/>
    <property type="match status" value="1"/>
</dbReference>
<dbReference type="SUPFAM" id="SSF51621">
    <property type="entry name" value="Phosphoenolpyruvate/pyruvate domain"/>
    <property type="match status" value="1"/>
</dbReference>
<reference key="1">
    <citation type="journal article" date="2002" name="DNA Res.">
        <title>Complete genomic sequence of nitrogen-fixing symbiotic bacterium Bradyrhizobium japonicum USDA110.</title>
        <authorList>
            <person name="Kaneko T."/>
            <person name="Nakamura Y."/>
            <person name="Sato S."/>
            <person name="Minamisawa K."/>
            <person name="Uchiumi T."/>
            <person name="Sasamoto S."/>
            <person name="Watanabe A."/>
            <person name="Idesawa K."/>
            <person name="Iriguchi M."/>
            <person name="Kawashima K."/>
            <person name="Kohara M."/>
            <person name="Matsumoto M."/>
            <person name="Shimpo S."/>
            <person name="Tsuruoka H."/>
            <person name="Wada T."/>
            <person name="Yamada M."/>
            <person name="Tabata S."/>
        </authorList>
    </citation>
    <scope>NUCLEOTIDE SEQUENCE [LARGE SCALE GENOMIC DNA]</scope>
    <source>
        <strain>JCM 10833 / BCRC 13528 / IAM 13628 / NBRC 14792 / USDA 110</strain>
    </source>
</reference>
<sequence>MAFRSRREKLRSILSGPGCIHPGSVYDAISIRIAEDLGFPLGMFGGSVASLAVLGDPDITLITLTELAEQMRRMSRASALPVLVDADHGYGNALNVRRTVQELETAGAAGLTIEDTLLPAAFGEAKTQLISLEEGVGKMKAALSGRSDPTLVIMGRTGAAAITSLDDTIRRAQAYEATGVDALFFTGIKSRAELEAVAAATHLPIVLGGAPEELNAPDYLAGQRVRIALQGHAPIAAATQAVHDTLKALREGAPPKALKGLASAELTSRVMREAETKARGADVLGFKK</sequence>
<keyword id="KW-0210">Decarboxylase</keyword>
<keyword id="KW-0456">Lyase</keyword>
<keyword id="KW-0460">Magnesium</keyword>
<keyword id="KW-0479">Metal-binding</keyword>
<keyword id="KW-1185">Reference proteome</keyword>
<feature type="chain" id="PRO_0000364052" description="Oxaloacetate decarboxylase">
    <location>
        <begin position="1"/>
        <end position="288"/>
    </location>
</feature>
<feature type="binding site" evidence="1">
    <location>
        <position position="47"/>
    </location>
    <ligand>
        <name>substrate</name>
    </ligand>
</feature>
<feature type="binding site" evidence="1">
    <location>
        <position position="85"/>
    </location>
    <ligand>
        <name>Mg(2+)</name>
        <dbReference type="ChEBI" id="CHEBI:18420"/>
    </ligand>
</feature>
<feature type="binding site" evidence="1">
    <location>
        <position position="156"/>
    </location>
    <ligand>
        <name>substrate</name>
    </ligand>
</feature>
<feature type="binding site" evidence="1">
    <location>
        <position position="232"/>
    </location>
    <ligand>
        <name>substrate</name>
    </ligand>
</feature>
<accession>Q89JL7</accession>
<proteinExistence type="inferred from homology"/>
<name>OADC_BRADU</name>
<organism>
    <name type="scientific">Bradyrhizobium diazoefficiens (strain JCM 10833 / BCRC 13528 / IAM 13628 / NBRC 14792 / USDA 110)</name>
    <dbReference type="NCBI Taxonomy" id="224911"/>
    <lineage>
        <taxon>Bacteria</taxon>
        <taxon>Pseudomonadati</taxon>
        <taxon>Pseudomonadota</taxon>
        <taxon>Alphaproteobacteria</taxon>
        <taxon>Hyphomicrobiales</taxon>
        <taxon>Nitrobacteraceae</taxon>
        <taxon>Bradyrhizobium</taxon>
    </lineage>
</organism>
<protein>
    <recommendedName>
        <fullName evidence="1">Oxaloacetate decarboxylase</fullName>
        <ecNumber evidence="1">4.1.1.112</ecNumber>
    </recommendedName>
</protein>
<comment type="function">
    <text evidence="1">Catalyzes the decarboxylation of oxaloacetate into pyruvate. Seems to play a role in maintaining cellular concentrations of bicarbonate and pyruvate.</text>
</comment>
<comment type="catalytic activity">
    <reaction evidence="1">
        <text>oxaloacetate + H(+) = pyruvate + CO2</text>
        <dbReference type="Rhea" id="RHEA:15641"/>
        <dbReference type="ChEBI" id="CHEBI:15361"/>
        <dbReference type="ChEBI" id="CHEBI:15378"/>
        <dbReference type="ChEBI" id="CHEBI:16452"/>
        <dbReference type="ChEBI" id="CHEBI:16526"/>
        <dbReference type="EC" id="4.1.1.112"/>
    </reaction>
</comment>
<comment type="cofactor">
    <cofactor evidence="1">
        <name>Mg(2+)</name>
        <dbReference type="ChEBI" id="CHEBI:18420"/>
    </cofactor>
    <text evidence="1">Binds 1 Mg(2+) ion per subunit.</text>
</comment>
<comment type="subunit">
    <text evidence="1">Homotetramer; dimer of dimers.</text>
</comment>
<comment type="similarity">
    <text evidence="2">Belongs to the isocitrate lyase/PEP mutase superfamily. Oxaloacetate decarboxylase family.</text>
</comment>
<evidence type="ECO:0000255" key="1">
    <source>
        <dbReference type="HAMAP-Rule" id="MF_01299"/>
    </source>
</evidence>
<evidence type="ECO:0000305" key="2"/>